<proteinExistence type="inferred from homology"/>
<evidence type="ECO:0000255" key="1">
    <source>
        <dbReference type="HAMAP-Rule" id="MF_01322"/>
    </source>
</evidence>
<evidence type="ECO:0000256" key="2">
    <source>
        <dbReference type="SAM" id="MobiDB-lite"/>
    </source>
</evidence>
<keyword id="KW-0240">DNA-directed RNA polymerase</keyword>
<keyword id="KW-0460">Magnesium</keyword>
<keyword id="KW-0479">Metal-binding</keyword>
<keyword id="KW-0548">Nucleotidyltransferase</keyword>
<keyword id="KW-0804">Transcription</keyword>
<keyword id="KW-0808">Transferase</keyword>
<keyword id="KW-0862">Zinc</keyword>
<dbReference type="EC" id="2.7.7.6" evidence="1"/>
<dbReference type="EMBL" id="CP000350">
    <property type="protein sequence ID" value="ABJ76830.1"/>
    <property type="molecule type" value="Genomic_DNA"/>
</dbReference>
<dbReference type="RefSeq" id="WP_011671971.1">
    <property type="nucleotide sequence ID" value="NC_008510.1"/>
</dbReference>
<dbReference type="SMR" id="Q04QJ0"/>
<dbReference type="KEGG" id="lbj:LBJ_2364"/>
<dbReference type="HOGENOM" id="CLU_000524_3_1_12"/>
<dbReference type="Proteomes" id="UP000000656">
    <property type="component" value="Chromosome 1"/>
</dbReference>
<dbReference type="GO" id="GO:0000428">
    <property type="term" value="C:DNA-directed RNA polymerase complex"/>
    <property type="evidence" value="ECO:0007669"/>
    <property type="project" value="UniProtKB-KW"/>
</dbReference>
<dbReference type="GO" id="GO:0003677">
    <property type="term" value="F:DNA binding"/>
    <property type="evidence" value="ECO:0007669"/>
    <property type="project" value="UniProtKB-UniRule"/>
</dbReference>
<dbReference type="GO" id="GO:0003899">
    <property type="term" value="F:DNA-directed RNA polymerase activity"/>
    <property type="evidence" value="ECO:0007669"/>
    <property type="project" value="UniProtKB-UniRule"/>
</dbReference>
<dbReference type="GO" id="GO:0000287">
    <property type="term" value="F:magnesium ion binding"/>
    <property type="evidence" value="ECO:0007669"/>
    <property type="project" value="UniProtKB-UniRule"/>
</dbReference>
<dbReference type="GO" id="GO:0008270">
    <property type="term" value="F:zinc ion binding"/>
    <property type="evidence" value="ECO:0007669"/>
    <property type="project" value="UniProtKB-UniRule"/>
</dbReference>
<dbReference type="GO" id="GO:0006351">
    <property type="term" value="P:DNA-templated transcription"/>
    <property type="evidence" value="ECO:0007669"/>
    <property type="project" value="UniProtKB-UniRule"/>
</dbReference>
<dbReference type="CDD" id="cd02655">
    <property type="entry name" value="RNAP_beta'_C"/>
    <property type="match status" value="1"/>
</dbReference>
<dbReference type="CDD" id="cd01609">
    <property type="entry name" value="RNAP_beta'_N"/>
    <property type="match status" value="1"/>
</dbReference>
<dbReference type="FunFam" id="4.10.860.120:FF:000001">
    <property type="entry name" value="DNA-directed RNA polymerase subunit beta"/>
    <property type="match status" value="1"/>
</dbReference>
<dbReference type="Gene3D" id="1.10.132.30">
    <property type="match status" value="1"/>
</dbReference>
<dbReference type="Gene3D" id="1.10.150.390">
    <property type="match status" value="1"/>
</dbReference>
<dbReference type="Gene3D" id="1.10.1790.20">
    <property type="match status" value="1"/>
</dbReference>
<dbReference type="Gene3D" id="1.10.40.90">
    <property type="match status" value="1"/>
</dbReference>
<dbReference type="Gene3D" id="2.40.40.20">
    <property type="match status" value="1"/>
</dbReference>
<dbReference type="Gene3D" id="2.40.50.100">
    <property type="match status" value="2"/>
</dbReference>
<dbReference type="Gene3D" id="4.10.860.120">
    <property type="entry name" value="RNA polymerase II, clamp domain"/>
    <property type="match status" value="1"/>
</dbReference>
<dbReference type="Gene3D" id="1.10.274.100">
    <property type="entry name" value="RNA polymerase Rpb1, domain 3"/>
    <property type="match status" value="1"/>
</dbReference>
<dbReference type="HAMAP" id="MF_01322">
    <property type="entry name" value="RNApol_bact_RpoC"/>
    <property type="match status" value="1"/>
</dbReference>
<dbReference type="InterPro" id="IPR045867">
    <property type="entry name" value="DNA-dir_RpoC_beta_prime"/>
</dbReference>
<dbReference type="InterPro" id="IPR012754">
    <property type="entry name" value="DNA-dir_RpoC_beta_prime_bact"/>
</dbReference>
<dbReference type="InterPro" id="IPR000722">
    <property type="entry name" value="RNA_pol_asu"/>
</dbReference>
<dbReference type="InterPro" id="IPR006592">
    <property type="entry name" value="RNA_pol_N"/>
</dbReference>
<dbReference type="InterPro" id="IPR007080">
    <property type="entry name" value="RNA_pol_Rpb1_1"/>
</dbReference>
<dbReference type="InterPro" id="IPR007066">
    <property type="entry name" value="RNA_pol_Rpb1_3"/>
</dbReference>
<dbReference type="InterPro" id="IPR042102">
    <property type="entry name" value="RNA_pol_Rpb1_3_sf"/>
</dbReference>
<dbReference type="InterPro" id="IPR007083">
    <property type="entry name" value="RNA_pol_Rpb1_4"/>
</dbReference>
<dbReference type="InterPro" id="IPR007081">
    <property type="entry name" value="RNA_pol_Rpb1_5"/>
</dbReference>
<dbReference type="InterPro" id="IPR044893">
    <property type="entry name" value="RNA_pol_Rpb1_clamp_domain"/>
</dbReference>
<dbReference type="InterPro" id="IPR038120">
    <property type="entry name" value="Rpb1_funnel_sf"/>
</dbReference>
<dbReference type="NCBIfam" id="TIGR02386">
    <property type="entry name" value="rpoC_TIGR"/>
    <property type="match status" value="1"/>
</dbReference>
<dbReference type="PANTHER" id="PTHR19376">
    <property type="entry name" value="DNA-DIRECTED RNA POLYMERASE"/>
    <property type="match status" value="1"/>
</dbReference>
<dbReference type="PANTHER" id="PTHR19376:SF54">
    <property type="entry name" value="DNA-DIRECTED RNA POLYMERASE SUBUNIT BETA"/>
    <property type="match status" value="1"/>
</dbReference>
<dbReference type="Pfam" id="PF04997">
    <property type="entry name" value="RNA_pol_Rpb1_1"/>
    <property type="match status" value="1"/>
</dbReference>
<dbReference type="Pfam" id="PF00623">
    <property type="entry name" value="RNA_pol_Rpb1_2"/>
    <property type="match status" value="2"/>
</dbReference>
<dbReference type="Pfam" id="PF04983">
    <property type="entry name" value="RNA_pol_Rpb1_3"/>
    <property type="match status" value="1"/>
</dbReference>
<dbReference type="Pfam" id="PF05000">
    <property type="entry name" value="RNA_pol_Rpb1_4"/>
    <property type="match status" value="1"/>
</dbReference>
<dbReference type="Pfam" id="PF04998">
    <property type="entry name" value="RNA_pol_Rpb1_5"/>
    <property type="match status" value="1"/>
</dbReference>
<dbReference type="SMART" id="SM00663">
    <property type="entry name" value="RPOLA_N"/>
    <property type="match status" value="1"/>
</dbReference>
<dbReference type="SUPFAM" id="SSF64484">
    <property type="entry name" value="beta and beta-prime subunits of DNA dependent RNA-polymerase"/>
    <property type="match status" value="1"/>
</dbReference>
<sequence>MRSHNDFESITIRLASPERIKEWSYGEVKKPETINYRTLKPEKDGLFCEKIFGTTKDWECYCGKFKSIRYKGVICDKCGVEVTHSKVRRERMGHIELAAPVSHIWYYRSVPSRMGLLLDMTVNQLKSVLYFEKYVIIDPADSGRSRGELIDEEEYHGYLDEYGDKFVAGIGADAIKELLARIDVDAEARMIRQKIQDKDKISDKRILKRLEVLEAFRDSGNRPEWMVLDIVPVIPPELRPMVQLEGGRFATSDLNDLYRRVINRNNRLKRLLALKAPEIIVRNEKRMLQEAVDALFDNSRRKRAVKGKGNRPLKSISDMLKGKQGRFRQNLLGKRVDYSGRSVIVVGPELKYHEMGLPKKMALELFKPFIMKRLVDLDLAPNIKSAKKKVEAEDKEVFDVLEYVVKEHPVMLNRAPTLHRLGIQAFLPVLVEGKAIKLHPLVCHAFNADFDGDQMAIHVPLTPKAQLETWMLMLSPHNILNPANGHPICGPTQDIVLGIYYLTSELPSEPGAPLKSFSNLDEVHYAIDRGVVEFRTKISVYHQGKILETTPGRLIFNTILPEGYAYVNRPLSDKETNRIIADVYDKYGPAKTVLMLDDIKKLGYRYATLFAPTISIEDIRVSPGKVGLVGDANKEVEKADSEYRKGIITNEERRKKVIEIWTKTNDLITESMFKELEKDKGGFNPVFIMAASGARGSKQQIRQLAGMRGLMAKPSGEIIELAIRSNFREGLSVLEFFISTHGARKGLADTALKTADAGYLTRRLVDISQDVIISEDDCGTEESISLGIVKEGENVIVSLNDRVFGRYTAEDVIDPVTDKVVYPRNTLITREVGQKVENLGYDKIRVRSPLTCESKQGVCIRCYGMDMARLIPAEIGEAVGTIAAQSIGQPGTQLTMRTFHIGGAASAKVQEKEHKVSYTGIVNNINGRLITNEKSQSVFSRRGSIVIQRLIQQYKTEELSNLRVENGQKVDKGELVATSPSGENITSAMPGAVHIENGIFRILGEEAVIPVKTGTVVNVKVNDITQPNQPLAEFDPYNEVGISEIDGTVQWMDLEIGKNVRRDEDLRTSNILLKVIEQRREKLNPRIAVISGGSREEYSVPVDAIISVQDGDKVKAGDILFKIPTVAEKTRDITGGLPRVDELFEARRPKDATTLAETDGKIEISGEIVKEKRVLYIHPDNPDQEKVKVTIPIGKQIRVRNGDFVKRGDQIDDGNLDPHDILRVKGVTALQVYLVQEVQEVYRLQGVHINDKHIEVVVRQMLRKVLITDSGDTSFVNQQQIDRLMFNEENKRVIAEGGSPAESVPILLGLTKASLNTESFFSAASFQETTKVLTDAAIKGKTDNLMGLKENVIIGHMIPAGTGTKKYKDISVFKSAYGDLDRPLEEEEEEEIPQSIADDSDGDE</sequence>
<protein>
    <recommendedName>
        <fullName evidence="1">DNA-directed RNA polymerase subunit beta'</fullName>
        <shortName evidence="1">RNAP subunit beta'</shortName>
        <ecNumber evidence="1">2.7.7.6</ecNumber>
    </recommendedName>
    <alternativeName>
        <fullName evidence="1">RNA polymerase subunit beta'</fullName>
    </alternativeName>
    <alternativeName>
        <fullName evidence="1">Transcriptase subunit beta'</fullName>
    </alternativeName>
</protein>
<comment type="function">
    <text evidence="1">DNA-dependent RNA polymerase catalyzes the transcription of DNA into RNA using the four ribonucleoside triphosphates as substrates.</text>
</comment>
<comment type="catalytic activity">
    <reaction evidence="1">
        <text>RNA(n) + a ribonucleoside 5'-triphosphate = RNA(n+1) + diphosphate</text>
        <dbReference type="Rhea" id="RHEA:21248"/>
        <dbReference type="Rhea" id="RHEA-COMP:14527"/>
        <dbReference type="Rhea" id="RHEA-COMP:17342"/>
        <dbReference type="ChEBI" id="CHEBI:33019"/>
        <dbReference type="ChEBI" id="CHEBI:61557"/>
        <dbReference type="ChEBI" id="CHEBI:140395"/>
        <dbReference type="EC" id="2.7.7.6"/>
    </reaction>
</comment>
<comment type="cofactor">
    <cofactor evidence="1">
        <name>Mg(2+)</name>
        <dbReference type="ChEBI" id="CHEBI:18420"/>
    </cofactor>
    <text evidence="1">Binds 1 Mg(2+) ion per subunit.</text>
</comment>
<comment type="cofactor">
    <cofactor evidence="1">
        <name>Zn(2+)</name>
        <dbReference type="ChEBI" id="CHEBI:29105"/>
    </cofactor>
    <text evidence="1">Binds 2 Zn(2+) ions per subunit.</text>
</comment>
<comment type="subunit">
    <text evidence="1">The RNAP catalytic core consists of 2 alpha, 1 beta, 1 beta' and 1 omega subunit. When a sigma factor is associated with the core the holoenzyme is formed, which can initiate transcription.</text>
</comment>
<comment type="similarity">
    <text evidence="1">Belongs to the RNA polymerase beta' chain family.</text>
</comment>
<organism>
    <name type="scientific">Leptospira borgpetersenii serovar Hardjo-bovis (strain JB197)</name>
    <dbReference type="NCBI Taxonomy" id="355277"/>
    <lineage>
        <taxon>Bacteria</taxon>
        <taxon>Pseudomonadati</taxon>
        <taxon>Spirochaetota</taxon>
        <taxon>Spirochaetia</taxon>
        <taxon>Leptospirales</taxon>
        <taxon>Leptospiraceae</taxon>
        <taxon>Leptospira</taxon>
    </lineage>
</organism>
<accession>Q04QJ0</accession>
<gene>
    <name evidence="1" type="primary">rpoC</name>
    <name type="ordered locus">LBJ_2364</name>
</gene>
<name>RPOC_LEPBJ</name>
<reference key="1">
    <citation type="journal article" date="2006" name="Proc. Natl. Acad. Sci. U.S.A.">
        <title>Genome reduction in Leptospira borgpetersenii reflects limited transmission potential.</title>
        <authorList>
            <person name="Bulach D.M."/>
            <person name="Zuerner R.L."/>
            <person name="Wilson P."/>
            <person name="Seemann T."/>
            <person name="McGrath A."/>
            <person name="Cullen P.A."/>
            <person name="Davis J."/>
            <person name="Johnson M."/>
            <person name="Kuczek E."/>
            <person name="Alt D.P."/>
            <person name="Peterson-Burch B."/>
            <person name="Coppel R.L."/>
            <person name="Rood J.I."/>
            <person name="Davies J.K."/>
            <person name="Adler B."/>
        </authorList>
    </citation>
    <scope>NUCLEOTIDE SEQUENCE [LARGE SCALE GENOMIC DNA]</scope>
    <source>
        <strain>JB197</strain>
    </source>
</reference>
<feature type="chain" id="PRO_0000308848" description="DNA-directed RNA polymerase subunit beta'">
    <location>
        <begin position="1"/>
        <end position="1404"/>
    </location>
</feature>
<feature type="region of interest" description="Disordered" evidence="2">
    <location>
        <begin position="1381"/>
        <end position="1404"/>
    </location>
</feature>
<feature type="compositionally biased region" description="Acidic residues" evidence="2">
    <location>
        <begin position="1384"/>
        <end position="1404"/>
    </location>
</feature>
<feature type="binding site" evidence="1">
    <location>
        <position position="60"/>
    </location>
    <ligand>
        <name>Zn(2+)</name>
        <dbReference type="ChEBI" id="CHEBI:29105"/>
        <label>1</label>
    </ligand>
</feature>
<feature type="binding site" evidence="1">
    <location>
        <position position="62"/>
    </location>
    <ligand>
        <name>Zn(2+)</name>
        <dbReference type="ChEBI" id="CHEBI:29105"/>
        <label>1</label>
    </ligand>
</feature>
<feature type="binding site" evidence="1">
    <location>
        <position position="75"/>
    </location>
    <ligand>
        <name>Zn(2+)</name>
        <dbReference type="ChEBI" id="CHEBI:29105"/>
        <label>1</label>
    </ligand>
</feature>
<feature type="binding site" evidence="1">
    <location>
        <position position="78"/>
    </location>
    <ligand>
        <name>Zn(2+)</name>
        <dbReference type="ChEBI" id="CHEBI:29105"/>
        <label>1</label>
    </ligand>
</feature>
<feature type="binding site" evidence="1">
    <location>
        <position position="449"/>
    </location>
    <ligand>
        <name>Mg(2+)</name>
        <dbReference type="ChEBI" id="CHEBI:18420"/>
    </ligand>
</feature>
<feature type="binding site" evidence="1">
    <location>
        <position position="451"/>
    </location>
    <ligand>
        <name>Mg(2+)</name>
        <dbReference type="ChEBI" id="CHEBI:18420"/>
    </ligand>
</feature>
<feature type="binding site" evidence="1">
    <location>
        <position position="453"/>
    </location>
    <ligand>
        <name>Mg(2+)</name>
        <dbReference type="ChEBI" id="CHEBI:18420"/>
    </ligand>
</feature>
<feature type="binding site" evidence="1">
    <location>
        <position position="778"/>
    </location>
    <ligand>
        <name>Zn(2+)</name>
        <dbReference type="ChEBI" id="CHEBI:29105"/>
        <label>2</label>
    </ligand>
</feature>
<feature type="binding site" evidence="1">
    <location>
        <position position="852"/>
    </location>
    <ligand>
        <name>Zn(2+)</name>
        <dbReference type="ChEBI" id="CHEBI:29105"/>
        <label>2</label>
    </ligand>
</feature>
<feature type="binding site" evidence="1">
    <location>
        <position position="859"/>
    </location>
    <ligand>
        <name>Zn(2+)</name>
        <dbReference type="ChEBI" id="CHEBI:29105"/>
        <label>2</label>
    </ligand>
</feature>
<feature type="binding site" evidence="1">
    <location>
        <position position="862"/>
    </location>
    <ligand>
        <name>Zn(2+)</name>
        <dbReference type="ChEBI" id="CHEBI:29105"/>
        <label>2</label>
    </ligand>
</feature>